<organism>
    <name type="scientific">Polynucleobacter necessarius subsp. necessarius (strain STIR1)</name>
    <dbReference type="NCBI Taxonomy" id="452638"/>
    <lineage>
        <taxon>Bacteria</taxon>
        <taxon>Pseudomonadati</taxon>
        <taxon>Pseudomonadota</taxon>
        <taxon>Betaproteobacteria</taxon>
        <taxon>Burkholderiales</taxon>
        <taxon>Burkholderiaceae</taxon>
        <taxon>Polynucleobacter</taxon>
    </lineage>
</organism>
<accession>B1XT06</accession>
<reference key="1">
    <citation type="journal article" date="2013" name="Proc. Natl. Acad. Sci. U.S.A.">
        <title>Polynucleobacter necessarius, a model for genome reduction in both free-living and symbiotic bacteria.</title>
        <authorList>
            <person name="Boscaro V."/>
            <person name="Felletti M."/>
            <person name="Vannini C."/>
            <person name="Ackerman M.S."/>
            <person name="Chain P.S."/>
            <person name="Malfatti S."/>
            <person name="Vergez L.M."/>
            <person name="Shin M."/>
            <person name="Doak T.G."/>
            <person name="Lynch M."/>
            <person name="Petroni G."/>
        </authorList>
    </citation>
    <scope>NUCLEOTIDE SEQUENCE [LARGE SCALE GENOMIC DNA]</scope>
    <source>
        <strain>STIR1</strain>
    </source>
</reference>
<feature type="chain" id="PRO_1000090655" description="Phospho-N-acetylmuramoyl-pentapeptide-transferase">
    <location>
        <begin position="1"/>
        <end position="389"/>
    </location>
</feature>
<feature type="transmembrane region" description="Helical" evidence="1">
    <location>
        <begin position="25"/>
        <end position="45"/>
    </location>
</feature>
<feature type="transmembrane region" description="Helical" evidence="1">
    <location>
        <begin position="73"/>
        <end position="93"/>
    </location>
</feature>
<feature type="transmembrane region" description="Helical" evidence="1">
    <location>
        <begin position="97"/>
        <end position="117"/>
    </location>
</feature>
<feature type="transmembrane region" description="Helical" evidence="1">
    <location>
        <begin position="134"/>
        <end position="154"/>
    </location>
</feature>
<feature type="transmembrane region" description="Helical" evidence="1">
    <location>
        <begin position="190"/>
        <end position="210"/>
    </location>
</feature>
<feature type="transmembrane region" description="Helical" evidence="1">
    <location>
        <begin position="222"/>
        <end position="242"/>
    </location>
</feature>
<feature type="transmembrane region" description="Helical" evidence="1">
    <location>
        <begin position="258"/>
        <end position="278"/>
    </location>
</feature>
<feature type="transmembrane region" description="Helical" evidence="1">
    <location>
        <begin position="286"/>
        <end position="306"/>
    </location>
</feature>
<feature type="transmembrane region" description="Helical" evidence="1">
    <location>
        <begin position="311"/>
        <end position="331"/>
    </location>
</feature>
<feature type="transmembrane region" description="Helical" evidence="1">
    <location>
        <begin position="366"/>
        <end position="386"/>
    </location>
</feature>
<evidence type="ECO:0000255" key="1">
    <source>
        <dbReference type="HAMAP-Rule" id="MF_00038"/>
    </source>
</evidence>
<dbReference type="EC" id="2.7.8.13" evidence="1"/>
<dbReference type="EMBL" id="CP001010">
    <property type="protein sequence ID" value="ACB43483.1"/>
    <property type="molecule type" value="Genomic_DNA"/>
</dbReference>
<dbReference type="SMR" id="B1XT06"/>
<dbReference type="STRING" id="452638.Pnec_0178"/>
<dbReference type="KEGG" id="pne:Pnec_0178"/>
<dbReference type="eggNOG" id="COG0472">
    <property type="taxonomic scope" value="Bacteria"/>
</dbReference>
<dbReference type="HOGENOM" id="CLU_023982_0_0_4"/>
<dbReference type="OrthoDB" id="9805475at2"/>
<dbReference type="UniPathway" id="UPA00219"/>
<dbReference type="GO" id="GO:0005886">
    <property type="term" value="C:plasma membrane"/>
    <property type="evidence" value="ECO:0007669"/>
    <property type="project" value="UniProtKB-SubCell"/>
</dbReference>
<dbReference type="GO" id="GO:0046872">
    <property type="term" value="F:metal ion binding"/>
    <property type="evidence" value="ECO:0007669"/>
    <property type="project" value="UniProtKB-KW"/>
</dbReference>
<dbReference type="GO" id="GO:0008963">
    <property type="term" value="F:phospho-N-acetylmuramoyl-pentapeptide-transferase activity"/>
    <property type="evidence" value="ECO:0007669"/>
    <property type="project" value="UniProtKB-UniRule"/>
</dbReference>
<dbReference type="GO" id="GO:0051992">
    <property type="term" value="F:UDP-N-acetylmuramoyl-L-alanyl-D-glutamyl-meso-2,6-diaminopimelyl-D-alanyl-D-alanine:undecaprenyl-phosphate transferase activity"/>
    <property type="evidence" value="ECO:0007669"/>
    <property type="project" value="RHEA"/>
</dbReference>
<dbReference type="GO" id="GO:0051301">
    <property type="term" value="P:cell division"/>
    <property type="evidence" value="ECO:0007669"/>
    <property type="project" value="UniProtKB-KW"/>
</dbReference>
<dbReference type="GO" id="GO:0071555">
    <property type="term" value="P:cell wall organization"/>
    <property type="evidence" value="ECO:0007669"/>
    <property type="project" value="UniProtKB-KW"/>
</dbReference>
<dbReference type="GO" id="GO:0009252">
    <property type="term" value="P:peptidoglycan biosynthetic process"/>
    <property type="evidence" value="ECO:0007669"/>
    <property type="project" value="UniProtKB-UniRule"/>
</dbReference>
<dbReference type="GO" id="GO:0008360">
    <property type="term" value="P:regulation of cell shape"/>
    <property type="evidence" value="ECO:0007669"/>
    <property type="project" value="UniProtKB-KW"/>
</dbReference>
<dbReference type="CDD" id="cd06852">
    <property type="entry name" value="GT_MraY"/>
    <property type="match status" value="1"/>
</dbReference>
<dbReference type="HAMAP" id="MF_00038">
    <property type="entry name" value="MraY"/>
    <property type="match status" value="1"/>
</dbReference>
<dbReference type="InterPro" id="IPR000715">
    <property type="entry name" value="Glycosyl_transferase_4"/>
</dbReference>
<dbReference type="InterPro" id="IPR003524">
    <property type="entry name" value="PNAcMuramoyl-5peptid_Trfase"/>
</dbReference>
<dbReference type="InterPro" id="IPR018480">
    <property type="entry name" value="PNAcMuramoyl-5peptid_Trfase_CS"/>
</dbReference>
<dbReference type="NCBIfam" id="TIGR00445">
    <property type="entry name" value="mraY"/>
    <property type="match status" value="1"/>
</dbReference>
<dbReference type="PANTHER" id="PTHR22926">
    <property type="entry name" value="PHOSPHO-N-ACETYLMURAMOYL-PENTAPEPTIDE-TRANSFERASE"/>
    <property type="match status" value="1"/>
</dbReference>
<dbReference type="PANTHER" id="PTHR22926:SF5">
    <property type="entry name" value="PHOSPHO-N-ACETYLMURAMOYL-PENTAPEPTIDE-TRANSFERASE HOMOLOG"/>
    <property type="match status" value="1"/>
</dbReference>
<dbReference type="Pfam" id="PF00953">
    <property type="entry name" value="Glycos_transf_4"/>
    <property type="match status" value="1"/>
</dbReference>
<dbReference type="Pfam" id="PF10555">
    <property type="entry name" value="MraY_sig1"/>
    <property type="match status" value="1"/>
</dbReference>
<dbReference type="PROSITE" id="PS01347">
    <property type="entry name" value="MRAY_1"/>
    <property type="match status" value="1"/>
</dbReference>
<dbReference type="PROSITE" id="PS01348">
    <property type="entry name" value="MRAY_2"/>
    <property type="match status" value="1"/>
</dbReference>
<keyword id="KW-0131">Cell cycle</keyword>
<keyword id="KW-0132">Cell division</keyword>
<keyword id="KW-0997">Cell inner membrane</keyword>
<keyword id="KW-1003">Cell membrane</keyword>
<keyword id="KW-0133">Cell shape</keyword>
<keyword id="KW-0961">Cell wall biogenesis/degradation</keyword>
<keyword id="KW-0460">Magnesium</keyword>
<keyword id="KW-0472">Membrane</keyword>
<keyword id="KW-0479">Metal-binding</keyword>
<keyword id="KW-0573">Peptidoglycan synthesis</keyword>
<keyword id="KW-0808">Transferase</keyword>
<keyword id="KW-0812">Transmembrane</keyword>
<keyword id="KW-1133">Transmembrane helix</keyword>
<name>MRAY_POLNS</name>
<comment type="function">
    <text evidence="1">Catalyzes the initial step of the lipid cycle reactions in the biosynthesis of the cell wall peptidoglycan: transfers peptidoglycan precursor phospho-MurNAc-pentapeptide from UDP-MurNAc-pentapeptide onto the lipid carrier undecaprenyl phosphate, yielding undecaprenyl-pyrophosphoryl-MurNAc-pentapeptide, known as lipid I.</text>
</comment>
<comment type="catalytic activity">
    <reaction evidence="1">
        <text>UDP-N-acetyl-alpha-D-muramoyl-L-alanyl-gamma-D-glutamyl-meso-2,6-diaminopimeloyl-D-alanyl-D-alanine + di-trans,octa-cis-undecaprenyl phosphate = di-trans,octa-cis-undecaprenyl diphospho-N-acetyl-alpha-D-muramoyl-L-alanyl-D-glutamyl-meso-2,6-diaminopimeloyl-D-alanyl-D-alanine + UMP</text>
        <dbReference type="Rhea" id="RHEA:28386"/>
        <dbReference type="ChEBI" id="CHEBI:57865"/>
        <dbReference type="ChEBI" id="CHEBI:60392"/>
        <dbReference type="ChEBI" id="CHEBI:61386"/>
        <dbReference type="ChEBI" id="CHEBI:61387"/>
        <dbReference type="EC" id="2.7.8.13"/>
    </reaction>
</comment>
<comment type="cofactor">
    <cofactor evidence="1">
        <name>Mg(2+)</name>
        <dbReference type="ChEBI" id="CHEBI:18420"/>
    </cofactor>
</comment>
<comment type="pathway">
    <text evidence="1">Cell wall biogenesis; peptidoglycan biosynthesis.</text>
</comment>
<comment type="subcellular location">
    <subcellularLocation>
        <location evidence="1">Cell inner membrane</location>
        <topology evidence="1">Multi-pass membrane protein</topology>
    </subcellularLocation>
</comment>
<comment type="similarity">
    <text evidence="1">Belongs to the glycosyltransferase 4 family. MraY subfamily.</text>
</comment>
<gene>
    <name evidence="1" type="primary">mraY</name>
    <name type="ordered locus">Pnec_0178</name>
</gene>
<sequence length="389" mass="42942">MLLMLAQWLQDDFGFFRVFNYITFRAVMATVTALLIGLAAGPWVIRKLAALKVGQAVRTDGPQTHLVKSGTPTMGGVLILIGIFISCILWADLSNRFIWIVMIVTFGFGLVGWVDDYRKVVYKDPKGMASRGKFFWQTLIGLFAAIYLAFSVSEVNNLKVLQLFYKWLRSGFALDLPAKTNLLLPFMKEVSYPLGIMGFIILSYLVIVGSSNAVNLTDGLDGLVIMPVILVGAALGAFAYVMGNAIYAKYLLFPYIPGAGELMIFCGAMGGAGLAFLWYNTHPAQVFMGDVGALALGGALGTIAVIVRQEIVLFVMGGIFVAETISVMLQVFWFKVTKKHFGEGRRIFRMAPLHHHFELGGWKETQVVVRFWIITILLVLIGLSSLKLR</sequence>
<proteinExistence type="inferred from homology"/>
<protein>
    <recommendedName>
        <fullName evidence="1">Phospho-N-acetylmuramoyl-pentapeptide-transferase</fullName>
        <ecNumber evidence="1">2.7.8.13</ecNumber>
    </recommendedName>
    <alternativeName>
        <fullName evidence="1">UDP-MurNAc-pentapeptide phosphotransferase</fullName>
    </alternativeName>
</protein>